<protein>
    <recommendedName>
        <fullName evidence="1">Protein translocase subunit SecA</fullName>
        <ecNumber evidence="1">7.4.2.8</ecNumber>
    </recommendedName>
</protein>
<proteinExistence type="inferred from homology"/>
<keyword id="KW-0067">ATP-binding</keyword>
<keyword id="KW-0997">Cell inner membrane</keyword>
<keyword id="KW-1003">Cell membrane</keyword>
<keyword id="KW-0963">Cytoplasm</keyword>
<keyword id="KW-0472">Membrane</keyword>
<keyword id="KW-0479">Metal-binding</keyword>
<keyword id="KW-0547">Nucleotide-binding</keyword>
<keyword id="KW-0653">Protein transport</keyword>
<keyword id="KW-1185">Reference proteome</keyword>
<keyword id="KW-1278">Translocase</keyword>
<keyword id="KW-0811">Translocation</keyword>
<keyword id="KW-0813">Transport</keyword>
<keyword id="KW-0862">Zinc</keyword>
<accession>Q5F807</accession>
<dbReference type="EC" id="7.4.2.8" evidence="1"/>
<dbReference type="EMBL" id="AE004969">
    <property type="protein sequence ID" value="AAW89680.1"/>
    <property type="molecule type" value="Genomic_DNA"/>
</dbReference>
<dbReference type="RefSeq" id="WP_003706354.1">
    <property type="nucleotide sequence ID" value="NC_002946.2"/>
</dbReference>
<dbReference type="RefSeq" id="YP_208092.1">
    <property type="nucleotide sequence ID" value="NC_002946.2"/>
</dbReference>
<dbReference type="SMR" id="Q5F807"/>
<dbReference type="STRING" id="242231.NGO_0996"/>
<dbReference type="KEGG" id="ngo:NGO_0996"/>
<dbReference type="PATRIC" id="fig|242231.10.peg.1166"/>
<dbReference type="HOGENOM" id="CLU_005314_3_0_4"/>
<dbReference type="Proteomes" id="UP000000535">
    <property type="component" value="Chromosome"/>
</dbReference>
<dbReference type="GO" id="GO:0031522">
    <property type="term" value="C:cell envelope Sec protein transport complex"/>
    <property type="evidence" value="ECO:0007669"/>
    <property type="project" value="TreeGrafter"/>
</dbReference>
<dbReference type="GO" id="GO:0005829">
    <property type="term" value="C:cytosol"/>
    <property type="evidence" value="ECO:0007669"/>
    <property type="project" value="TreeGrafter"/>
</dbReference>
<dbReference type="GO" id="GO:0005886">
    <property type="term" value="C:plasma membrane"/>
    <property type="evidence" value="ECO:0007669"/>
    <property type="project" value="UniProtKB-SubCell"/>
</dbReference>
<dbReference type="GO" id="GO:0005524">
    <property type="term" value="F:ATP binding"/>
    <property type="evidence" value="ECO:0007669"/>
    <property type="project" value="UniProtKB-UniRule"/>
</dbReference>
<dbReference type="GO" id="GO:0046872">
    <property type="term" value="F:metal ion binding"/>
    <property type="evidence" value="ECO:0007669"/>
    <property type="project" value="UniProtKB-KW"/>
</dbReference>
<dbReference type="GO" id="GO:0008564">
    <property type="term" value="F:protein-exporting ATPase activity"/>
    <property type="evidence" value="ECO:0007669"/>
    <property type="project" value="UniProtKB-EC"/>
</dbReference>
<dbReference type="GO" id="GO:0065002">
    <property type="term" value="P:intracellular protein transmembrane transport"/>
    <property type="evidence" value="ECO:0007669"/>
    <property type="project" value="UniProtKB-UniRule"/>
</dbReference>
<dbReference type="GO" id="GO:0017038">
    <property type="term" value="P:protein import"/>
    <property type="evidence" value="ECO:0007669"/>
    <property type="project" value="InterPro"/>
</dbReference>
<dbReference type="GO" id="GO:0006605">
    <property type="term" value="P:protein targeting"/>
    <property type="evidence" value="ECO:0007669"/>
    <property type="project" value="UniProtKB-UniRule"/>
</dbReference>
<dbReference type="GO" id="GO:0043952">
    <property type="term" value="P:protein transport by the Sec complex"/>
    <property type="evidence" value="ECO:0007669"/>
    <property type="project" value="TreeGrafter"/>
</dbReference>
<dbReference type="CDD" id="cd17928">
    <property type="entry name" value="DEXDc_SecA"/>
    <property type="match status" value="1"/>
</dbReference>
<dbReference type="CDD" id="cd18803">
    <property type="entry name" value="SF2_C_secA"/>
    <property type="match status" value="1"/>
</dbReference>
<dbReference type="FunFam" id="3.40.50.300:FF:000081">
    <property type="entry name" value="Preprotein translocase subunit SecA"/>
    <property type="match status" value="1"/>
</dbReference>
<dbReference type="FunFam" id="3.40.50.300:FF:000113">
    <property type="entry name" value="Preprotein translocase subunit SecA"/>
    <property type="match status" value="1"/>
</dbReference>
<dbReference type="FunFam" id="3.90.1440.10:FF:000001">
    <property type="entry name" value="Preprotein translocase subunit SecA"/>
    <property type="match status" value="1"/>
</dbReference>
<dbReference type="FunFam" id="1.10.3060.10:FF:000003">
    <property type="entry name" value="Protein translocase subunit SecA"/>
    <property type="match status" value="1"/>
</dbReference>
<dbReference type="Gene3D" id="1.10.3060.10">
    <property type="entry name" value="Helical scaffold and wing domains of SecA"/>
    <property type="match status" value="1"/>
</dbReference>
<dbReference type="Gene3D" id="3.40.50.300">
    <property type="entry name" value="P-loop containing nucleotide triphosphate hydrolases"/>
    <property type="match status" value="2"/>
</dbReference>
<dbReference type="Gene3D" id="3.90.1440.10">
    <property type="entry name" value="SecA, preprotein cross-linking domain"/>
    <property type="match status" value="1"/>
</dbReference>
<dbReference type="HAMAP" id="MF_01382">
    <property type="entry name" value="SecA"/>
    <property type="match status" value="1"/>
</dbReference>
<dbReference type="InterPro" id="IPR014001">
    <property type="entry name" value="Helicase_ATP-bd"/>
</dbReference>
<dbReference type="InterPro" id="IPR001650">
    <property type="entry name" value="Helicase_C-like"/>
</dbReference>
<dbReference type="InterPro" id="IPR027417">
    <property type="entry name" value="P-loop_NTPase"/>
</dbReference>
<dbReference type="InterPro" id="IPR004027">
    <property type="entry name" value="SEC_C_motif"/>
</dbReference>
<dbReference type="InterPro" id="IPR000185">
    <property type="entry name" value="SecA"/>
</dbReference>
<dbReference type="InterPro" id="IPR020937">
    <property type="entry name" value="SecA_CS"/>
</dbReference>
<dbReference type="InterPro" id="IPR011115">
    <property type="entry name" value="SecA_DEAD"/>
</dbReference>
<dbReference type="InterPro" id="IPR014018">
    <property type="entry name" value="SecA_motor_DEAD"/>
</dbReference>
<dbReference type="InterPro" id="IPR011130">
    <property type="entry name" value="SecA_preprotein_X-link_dom"/>
</dbReference>
<dbReference type="InterPro" id="IPR044722">
    <property type="entry name" value="SecA_SF2_C"/>
</dbReference>
<dbReference type="InterPro" id="IPR011116">
    <property type="entry name" value="SecA_Wing/Scaffold"/>
</dbReference>
<dbReference type="InterPro" id="IPR036266">
    <property type="entry name" value="SecA_Wing/Scaffold_sf"/>
</dbReference>
<dbReference type="InterPro" id="IPR036670">
    <property type="entry name" value="SecA_X-link_sf"/>
</dbReference>
<dbReference type="NCBIfam" id="NF009538">
    <property type="entry name" value="PRK12904.1"/>
    <property type="match status" value="1"/>
</dbReference>
<dbReference type="NCBIfam" id="TIGR00963">
    <property type="entry name" value="secA"/>
    <property type="match status" value="1"/>
</dbReference>
<dbReference type="PANTHER" id="PTHR30612:SF0">
    <property type="entry name" value="CHLOROPLAST PROTEIN-TRANSPORTING ATPASE"/>
    <property type="match status" value="1"/>
</dbReference>
<dbReference type="PANTHER" id="PTHR30612">
    <property type="entry name" value="SECA INNER MEMBRANE COMPONENT OF SEC PROTEIN SECRETION SYSTEM"/>
    <property type="match status" value="1"/>
</dbReference>
<dbReference type="Pfam" id="PF21090">
    <property type="entry name" value="P-loop_SecA"/>
    <property type="match status" value="1"/>
</dbReference>
<dbReference type="Pfam" id="PF02810">
    <property type="entry name" value="SEC-C"/>
    <property type="match status" value="1"/>
</dbReference>
<dbReference type="Pfam" id="PF07517">
    <property type="entry name" value="SecA_DEAD"/>
    <property type="match status" value="1"/>
</dbReference>
<dbReference type="Pfam" id="PF01043">
    <property type="entry name" value="SecA_PP_bind"/>
    <property type="match status" value="1"/>
</dbReference>
<dbReference type="Pfam" id="PF07516">
    <property type="entry name" value="SecA_SW"/>
    <property type="match status" value="1"/>
</dbReference>
<dbReference type="PRINTS" id="PR00906">
    <property type="entry name" value="SECA"/>
</dbReference>
<dbReference type="SMART" id="SM00957">
    <property type="entry name" value="SecA_DEAD"/>
    <property type="match status" value="1"/>
</dbReference>
<dbReference type="SMART" id="SM00958">
    <property type="entry name" value="SecA_PP_bind"/>
    <property type="match status" value="1"/>
</dbReference>
<dbReference type="SUPFAM" id="SSF81886">
    <property type="entry name" value="Helical scaffold and wing domains of SecA"/>
    <property type="match status" value="1"/>
</dbReference>
<dbReference type="SUPFAM" id="SSF52540">
    <property type="entry name" value="P-loop containing nucleoside triphosphate hydrolases"/>
    <property type="match status" value="2"/>
</dbReference>
<dbReference type="SUPFAM" id="SSF81767">
    <property type="entry name" value="Pre-protein crosslinking domain of SecA"/>
    <property type="match status" value="1"/>
</dbReference>
<dbReference type="PROSITE" id="PS01312">
    <property type="entry name" value="SECA"/>
    <property type="match status" value="1"/>
</dbReference>
<dbReference type="PROSITE" id="PS51196">
    <property type="entry name" value="SECA_MOTOR_DEAD"/>
    <property type="match status" value="1"/>
</dbReference>
<organism>
    <name type="scientific">Neisseria gonorrhoeae (strain ATCC 700825 / FA 1090)</name>
    <dbReference type="NCBI Taxonomy" id="242231"/>
    <lineage>
        <taxon>Bacteria</taxon>
        <taxon>Pseudomonadati</taxon>
        <taxon>Pseudomonadota</taxon>
        <taxon>Betaproteobacteria</taxon>
        <taxon>Neisseriales</taxon>
        <taxon>Neisseriaceae</taxon>
        <taxon>Neisseria</taxon>
    </lineage>
</organism>
<gene>
    <name evidence="1" type="primary">secA</name>
    <name type="ordered locus">NGO_0996</name>
</gene>
<comment type="function">
    <text evidence="1">Part of the Sec protein translocase complex. Interacts with the SecYEG preprotein conducting channel. Has a central role in coupling the hydrolysis of ATP to the transfer of proteins into and across the cell membrane, serving both as a receptor for the preprotein-SecB complex and as an ATP-driven molecular motor driving the stepwise translocation of polypeptide chains across the membrane.</text>
</comment>
<comment type="catalytic activity">
    <reaction evidence="1">
        <text>ATP + H2O + cellular proteinSide 1 = ADP + phosphate + cellular proteinSide 2.</text>
        <dbReference type="EC" id="7.4.2.8"/>
    </reaction>
</comment>
<comment type="cofactor">
    <cofactor evidence="1">
        <name>Zn(2+)</name>
        <dbReference type="ChEBI" id="CHEBI:29105"/>
    </cofactor>
    <text evidence="1">May bind 1 zinc ion per subunit.</text>
</comment>
<comment type="subunit">
    <text evidence="1">Monomer and homodimer. Part of the essential Sec protein translocation apparatus which comprises SecA, SecYEG and auxiliary proteins SecDF-YajC and YidC.</text>
</comment>
<comment type="subcellular location">
    <subcellularLocation>
        <location evidence="1">Cell inner membrane</location>
        <topology evidence="1">Peripheral membrane protein</topology>
        <orientation evidence="1">Cytoplasmic side</orientation>
    </subcellularLocation>
    <subcellularLocation>
        <location evidence="1">Cytoplasm</location>
    </subcellularLocation>
    <text evidence="1">Distribution is 50-50.</text>
</comment>
<comment type="similarity">
    <text evidence="1">Belongs to the SecA family.</text>
</comment>
<name>SECA_NEIG1</name>
<reference key="1">
    <citation type="submission" date="2003-03" db="EMBL/GenBank/DDBJ databases">
        <title>The complete genome sequence of Neisseria gonorrhoeae.</title>
        <authorList>
            <person name="Lewis L.A."/>
            <person name="Gillaspy A.F."/>
            <person name="McLaughlin R.E."/>
            <person name="Gipson M."/>
            <person name="Ducey T.F."/>
            <person name="Ownbey T."/>
            <person name="Hartman K."/>
            <person name="Nydick C."/>
            <person name="Carson M.B."/>
            <person name="Vaughn J."/>
            <person name="Thomson C."/>
            <person name="Song L."/>
            <person name="Lin S."/>
            <person name="Yuan X."/>
            <person name="Najar F."/>
            <person name="Zhan M."/>
            <person name="Ren Q."/>
            <person name="Zhu H."/>
            <person name="Qi S."/>
            <person name="Kenton S.M."/>
            <person name="Lai H."/>
            <person name="White J.D."/>
            <person name="Clifton S."/>
            <person name="Roe B.A."/>
            <person name="Dyer D.W."/>
        </authorList>
    </citation>
    <scope>NUCLEOTIDE SEQUENCE [LARGE SCALE GENOMIC DNA]</scope>
    <source>
        <strain>ATCC 700825 / FA 1090</strain>
    </source>
</reference>
<evidence type="ECO:0000255" key="1">
    <source>
        <dbReference type="HAMAP-Rule" id="MF_01382"/>
    </source>
</evidence>
<sequence length="916" mass="103203">MLTNIAKKIFGSRNDRLLKQYRKSVARINALEEQMQALSDADLQAKTAEFKQRLADGQTLDGILPEAFAVCREASRRVLGMRHFDVQLIGGMVLHDGKIAEMRTGEGKTLVATLAVYLNALAGKGVHVVTVNDYLASRDAGIMEPLYNFLGLTVGVIISDMQPFDRQNAYAADITYGTNNEFGFDYLRDNMVTDQYDKVQRELNFAVVDEVDSILIDEARTPLIISGQADDNIQLYQIMNTVPPHLVRQETEEGEGDYWVDEKAHQVILSETGHEHAEQILTQMGLLAENDSLYSAANISLMHHLMAALRAHSLFHKDQHYVIQDGEIVIVDEFTGRLMSGRRWSEGLHQAVEAKEGVEIKRENQTLASITFQNYFRLYTKLSGMTGTADTEAFEFQSIYNLETVIIPTNRPVQRKDLNDQIFRSAEEKFEAVVKDIEECHKRGQPVLVGTTSIENSELVSRLLQKAGLPHNVLNAKEHEREALIVAQAGKVGAITVATNMAGRGTDIVLGGNLKHQTDAIRADETLSDEEKQAQIAALENGWQAEHDKVMEAGGLHIIGTERHESRRIDNQLRGRSGRQGDPGSSRFYLSFEDPLLRLFALDRAAAILNRLAPERGVAIEHNLLTRQIEGAQRKVEGRNFDMRKQVLEYDDVANEQRKVIYSQRNEILTSKDIGDLMQEIRSDAVSDLVDTYMPPDSMEEQWDIPTLENRLAAEFRLQEDIQSWLKADNAIDGQDIKERLIERIENEYAAKTELVGKQAMADFERNVMLQAIDNQWREHLAAMDYLRQGIHLRSYAQKNPKQEYKREAFTMFQDLWNGIKFHIASLLTSVQIEQNPVAAVEEQPVGNIQSIHSESPDIEELLGQSQTDLVTEAFNPDGTDFSPEALEARGQIVHRNDPCPCGSGLKYKQCHGKLA</sequence>
<feature type="chain" id="PRO_0000320861" description="Protein translocase subunit SecA">
    <location>
        <begin position="1"/>
        <end position="916"/>
    </location>
</feature>
<feature type="binding site" evidence="1">
    <location>
        <position position="87"/>
    </location>
    <ligand>
        <name>ATP</name>
        <dbReference type="ChEBI" id="CHEBI:30616"/>
    </ligand>
</feature>
<feature type="binding site" evidence="1">
    <location>
        <begin position="105"/>
        <end position="109"/>
    </location>
    <ligand>
        <name>ATP</name>
        <dbReference type="ChEBI" id="CHEBI:30616"/>
    </ligand>
</feature>
<feature type="binding site" evidence="1">
    <location>
        <position position="507"/>
    </location>
    <ligand>
        <name>ATP</name>
        <dbReference type="ChEBI" id="CHEBI:30616"/>
    </ligand>
</feature>
<feature type="binding site" evidence="1">
    <location>
        <position position="900"/>
    </location>
    <ligand>
        <name>Zn(2+)</name>
        <dbReference type="ChEBI" id="CHEBI:29105"/>
    </ligand>
</feature>
<feature type="binding site" evidence="1">
    <location>
        <position position="902"/>
    </location>
    <ligand>
        <name>Zn(2+)</name>
        <dbReference type="ChEBI" id="CHEBI:29105"/>
    </ligand>
</feature>
<feature type="binding site" evidence="1">
    <location>
        <position position="911"/>
    </location>
    <ligand>
        <name>Zn(2+)</name>
        <dbReference type="ChEBI" id="CHEBI:29105"/>
    </ligand>
</feature>
<feature type="binding site" evidence="1">
    <location>
        <position position="912"/>
    </location>
    <ligand>
        <name>Zn(2+)</name>
        <dbReference type="ChEBI" id="CHEBI:29105"/>
    </ligand>
</feature>